<keyword id="KW-0067">ATP-binding</keyword>
<keyword id="KW-0378">Hydrolase</keyword>
<keyword id="KW-0547">Nucleotide-binding</keyword>
<keyword id="KW-1185">Reference proteome</keyword>
<proteinExistence type="inferred from homology"/>
<reference key="1">
    <citation type="submission" date="2008-04" db="EMBL/GenBank/DDBJ databases">
        <title>Complete sequence of chromosome of Natranaerobius thermophilus JW/NM-WN-LF.</title>
        <authorList>
            <consortium name="US DOE Joint Genome Institute"/>
            <person name="Copeland A."/>
            <person name="Lucas S."/>
            <person name="Lapidus A."/>
            <person name="Glavina del Rio T."/>
            <person name="Dalin E."/>
            <person name="Tice H."/>
            <person name="Bruce D."/>
            <person name="Goodwin L."/>
            <person name="Pitluck S."/>
            <person name="Chertkov O."/>
            <person name="Brettin T."/>
            <person name="Detter J.C."/>
            <person name="Han C."/>
            <person name="Kuske C.R."/>
            <person name="Schmutz J."/>
            <person name="Larimer F."/>
            <person name="Land M."/>
            <person name="Hauser L."/>
            <person name="Kyrpides N."/>
            <person name="Lykidis A."/>
            <person name="Mesbah N.M."/>
            <person name="Wiegel J."/>
        </authorList>
    </citation>
    <scope>NUCLEOTIDE SEQUENCE [LARGE SCALE GENOMIC DNA]</scope>
    <source>
        <strain>ATCC BAA-1301 / DSM 18059 / JW/NM-WN-LF</strain>
    </source>
</reference>
<accession>B2A1I6</accession>
<evidence type="ECO:0000255" key="1">
    <source>
        <dbReference type="HAMAP-Rule" id="MF_00691"/>
    </source>
</evidence>
<feature type="chain" id="PRO_1000132065" description="5-oxoprolinase subunit A">
    <location>
        <begin position="1"/>
        <end position="257"/>
    </location>
</feature>
<name>PXPA_NATTJ</name>
<protein>
    <recommendedName>
        <fullName evidence="1">5-oxoprolinase subunit A</fullName>
        <shortName evidence="1">5-OPase subunit A</shortName>
        <ecNumber evidence="1">3.5.2.9</ecNumber>
    </recommendedName>
    <alternativeName>
        <fullName evidence="1">5-oxoprolinase (ATP-hydrolyzing) subunit A</fullName>
    </alternativeName>
</protein>
<dbReference type="EC" id="3.5.2.9" evidence="1"/>
<dbReference type="EMBL" id="CP001034">
    <property type="protein sequence ID" value="ACB84726.1"/>
    <property type="molecule type" value="Genomic_DNA"/>
</dbReference>
<dbReference type="RefSeq" id="WP_012447601.1">
    <property type="nucleotide sequence ID" value="NC_010718.1"/>
</dbReference>
<dbReference type="SMR" id="B2A1I6"/>
<dbReference type="FunCoup" id="B2A1I6">
    <property type="interactions" value="14"/>
</dbReference>
<dbReference type="STRING" id="457570.Nther_1143"/>
<dbReference type="KEGG" id="nth:Nther_1143"/>
<dbReference type="eggNOG" id="COG1540">
    <property type="taxonomic scope" value="Bacteria"/>
</dbReference>
<dbReference type="HOGENOM" id="CLU_069535_0_0_9"/>
<dbReference type="InParanoid" id="B2A1I6"/>
<dbReference type="OrthoDB" id="9773478at2"/>
<dbReference type="Proteomes" id="UP000001683">
    <property type="component" value="Chromosome"/>
</dbReference>
<dbReference type="GO" id="GO:0017168">
    <property type="term" value="F:5-oxoprolinase (ATP-hydrolyzing) activity"/>
    <property type="evidence" value="ECO:0007669"/>
    <property type="project" value="UniProtKB-UniRule"/>
</dbReference>
<dbReference type="GO" id="GO:0005524">
    <property type="term" value="F:ATP binding"/>
    <property type="evidence" value="ECO:0007669"/>
    <property type="project" value="UniProtKB-UniRule"/>
</dbReference>
<dbReference type="GO" id="GO:0005975">
    <property type="term" value="P:carbohydrate metabolic process"/>
    <property type="evidence" value="ECO:0007669"/>
    <property type="project" value="InterPro"/>
</dbReference>
<dbReference type="CDD" id="cd10787">
    <property type="entry name" value="LamB_YcsF_like"/>
    <property type="match status" value="1"/>
</dbReference>
<dbReference type="Gene3D" id="3.20.20.370">
    <property type="entry name" value="Glycoside hydrolase/deacetylase"/>
    <property type="match status" value="1"/>
</dbReference>
<dbReference type="HAMAP" id="MF_00691">
    <property type="entry name" value="PxpA"/>
    <property type="match status" value="1"/>
</dbReference>
<dbReference type="InterPro" id="IPR011330">
    <property type="entry name" value="Glyco_hydro/deAcase_b/a-brl"/>
</dbReference>
<dbReference type="InterPro" id="IPR005501">
    <property type="entry name" value="LamB/YcsF/PxpA-like"/>
</dbReference>
<dbReference type="NCBIfam" id="NF003814">
    <property type="entry name" value="PRK05406.1-3"/>
    <property type="match status" value="1"/>
</dbReference>
<dbReference type="NCBIfam" id="NF003816">
    <property type="entry name" value="PRK05406.1-5"/>
    <property type="match status" value="1"/>
</dbReference>
<dbReference type="PANTHER" id="PTHR30292:SF0">
    <property type="entry name" value="5-OXOPROLINASE SUBUNIT A"/>
    <property type="match status" value="1"/>
</dbReference>
<dbReference type="PANTHER" id="PTHR30292">
    <property type="entry name" value="UNCHARACTERIZED PROTEIN YBGL-RELATED"/>
    <property type="match status" value="1"/>
</dbReference>
<dbReference type="Pfam" id="PF03746">
    <property type="entry name" value="LamB_YcsF"/>
    <property type="match status" value="1"/>
</dbReference>
<dbReference type="SUPFAM" id="SSF88713">
    <property type="entry name" value="Glycoside hydrolase/deacetylase"/>
    <property type="match status" value="1"/>
</dbReference>
<comment type="function">
    <text evidence="1">Catalyzes the cleavage of 5-oxoproline to form L-glutamate coupled to the hydrolysis of ATP to ADP and inorganic phosphate.</text>
</comment>
<comment type="catalytic activity">
    <reaction evidence="1">
        <text>5-oxo-L-proline + ATP + 2 H2O = L-glutamate + ADP + phosphate + H(+)</text>
        <dbReference type="Rhea" id="RHEA:10348"/>
        <dbReference type="ChEBI" id="CHEBI:15377"/>
        <dbReference type="ChEBI" id="CHEBI:15378"/>
        <dbReference type="ChEBI" id="CHEBI:29985"/>
        <dbReference type="ChEBI" id="CHEBI:30616"/>
        <dbReference type="ChEBI" id="CHEBI:43474"/>
        <dbReference type="ChEBI" id="CHEBI:58402"/>
        <dbReference type="ChEBI" id="CHEBI:456216"/>
        <dbReference type="EC" id="3.5.2.9"/>
    </reaction>
</comment>
<comment type="subunit">
    <text evidence="1">Forms a complex composed of PxpA, PxpB and PxpC.</text>
</comment>
<comment type="similarity">
    <text evidence="1">Belongs to the LamB/PxpA family.</text>
</comment>
<organism>
    <name type="scientific">Natranaerobius thermophilus (strain ATCC BAA-1301 / DSM 18059 / JW/NM-WN-LF)</name>
    <dbReference type="NCBI Taxonomy" id="457570"/>
    <lineage>
        <taxon>Bacteria</taxon>
        <taxon>Bacillati</taxon>
        <taxon>Bacillota</taxon>
        <taxon>Clostridia</taxon>
        <taxon>Natranaerobiales</taxon>
        <taxon>Natranaerobiaceae</taxon>
        <taxon>Natranaerobius</taxon>
    </lineage>
</organism>
<sequence>MKVIDLNCDMGESFGHYKIGCDEEVINYISSANIACGFHAGDPQVMDYTVKLARDNKVGVGAHPGFNDLQGFGRRKIHMTGEEIVNELIYQIGAIRSFCEANGVGLSHVKPHGALNNMASVDENLARAVAKAIKLTDPNLIYIALAGSKMEQIGREEGLKVAKEAFADRQYNPDGTLVSRQEAGAVLHDKETIIERVVQMASEGVVTAKDGTKLNINPDTICVHGDNPEAVELAASIRHMLQEHGITVKSLGTWFTG</sequence>
<gene>
    <name evidence="1" type="primary">pxpA</name>
    <name type="ordered locus">Nther_1143</name>
</gene>